<proteinExistence type="inferred from homology"/>
<dbReference type="EMBL" id="CP000781">
    <property type="protein sequence ID" value="ABS70001.1"/>
    <property type="molecule type" value="Genomic_DNA"/>
</dbReference>
<dbReference type="SMR" id="A7IPQ5"/>
<dbReference type="STRING" id="78245.Xaut_4783"/>
<dbReference type="KEGG" id="xau:Xaut_4783"/>
<dbReference type="eggNOG" id="COG0097">
    <property type="taxonomic scope" value="Bacteria"/>
</dbReference>
<dbReference type="HOGENOM" id="CLU_065464_1_2_5"/>
<dbReference type="OrthoDB" id="9805007at2"/>
<dbReference type="PhylomeDB" id="A7IPQ5"/>
<dbReference type="Proteomes" id="UP000002417">
    <property type="component" value="Chromosome"/>
</dbReference>
<dbReference type="GO" id="GO:0022625">
    <property type="term" value="C:cytosolic large ribosomal subunit"/>
    <property type="evidence" value="ECO:0007669"/>
    <property type="project" value="TreeGrafter"/>
</dbReference>
<dbReference type="GO" id="GO:0019843">
    <property type="term" value="F:rRNA binding"/>
    <property type="evidence" value="ECO:0007669"/>
    <property type="project" value="UniProtKB-UniRule"/>
</dbReference>
<dbReference type="GO" id="GO:0003735">
    <property type="term" value="F:structural constituent of ribosome"/>
    <property type="evidence" value="ECO:0007669"/>
    <property type="project" value="InterPro"/>
</dbReference>
<dbReference type="GO" id="GO:0002181">
    <property type="term" value="P:cytoplasmic translation"/>
    <property type="evidence" value="ECO:0007669"/>
    <property type="project" value="TreeGrafter"/>
</dbReference>
<dbReference type="FunFam" id="3.90.930.12:FF:000001">
    <property type="entry name" value="50S ribosomal protein L6"/>
    <property type="match status" value="1"/>
</dbReference>
<dbReference type="FunFam" id="3.90.930.12:FF:000002">
    <property type="entry name" value="50S ribosomal protein L6"/>
    <property type="match status" value="1"/>
</dbReference>
<dbReference type="Gene3D" id="3.90.930.12">
    <property type="entry name" value="Ribosomal protein L6, alpha-beta domain"/>
    <property type="match status" value="2"/>
</dbReference>
<dbReference type="HAMAP" id="MF_01365_B">
    <property type="entry name" value="Ribosomal_uL6_B"/>
    <property type="match status" value="1"/>
</dbReference>
<dbReference type="InterPro" id="IPR000702">
    <property type="entry name" value="Ribosomal_uL6-like"/>
</dbReference>
<dbReference type="InterPro" id="IPR036789">
    <property type="entry name" value="Ribosomal_uL6-like_a/b-dom_sf"/>
</dbReference>
<dbReference type="InterPro" id="IPR020040">
    <property type="entry name" value="Ribosomal_uL6_a/b-dom"/>
</dbReference>
<dbReference type="InterPro" id="IPR019906">
    <property type="entry name" value="Ribosomal_uL6_bac-type"/>
</dbReference>
<dbReference type="InterPro" id="IPR002358">
    <property type="entry name" value="Ribosomal_uL6_CS"/>
</dbReference>
<dbReference type="NCBIfam" id="TIGR03654">
    <property type="entry name" value="L6_bact"/>
    <property type="match status" value="1"/>
</dbReference>
<dbReference type="PANTHER" id="PTHR11655">
    <property type="entry name" value="60S/50S RIBOSOMAL PROTEIN L6/L9"/>
    <property type="match status" value="1"/>
</dbReference>
<dbReference type="PANTHER" id="PTHR11655:SF14">
    <property type="entry name" value="LARGE RIBOSOMAL SUBUNIT PROTEIN UL6M"/>
    <property type="match status" value="1"/>
</dbReference>
<dbReference type="Pfam" id="PF00347">
    <property type="entry name" value="Ribosomal_L6"/>
    <property type="match status" value="2"/>
</dbReference>
<dbReference type="PIRSF" id="PIRSF002162">
    <property type="entry name" value="Ribosomal_L6"/>
    <property type="match status" value="1"/>
</dbReference>
<dbReference type="PRINTS" id="PR00059">
    <property type="entry name" value="RIBOSOMALL6"/>
</dbReference>
<dbReference type="SUPFAM" id="SSF56053">
    <property type="entry name" value="Ribosomal protein L6"/>
    <property type="match status" value="2"/>
</dbReference>
<dbReference type="PROSITE" id="PS00525">
    <property type="entry name" value="RIBOSOMAL_L6_1"/>
    <property type="match status" value="1"/>
</dbReference>
<organism>
    <name type="scientific">Xanthobacter autotrophicus (strain ATCC BAA-1158 / Py2)</name>
    <dbReference type="NCBI Taxonomy" id="78245"/>
    <lineage>
        <taxon>Bacteria</taxon>
        <taxon>Pseudomonadati</taxon>
        <taxon>Pseudomonadota</taxon>
        <taxon>Alphaproteobacteria</taxon>
        <taxon>Hyphomicrobiales</taxon>
        <taxon>Xanthobacteraceae</taxon>
        <taxon>Xanthobacter</taxon>
    </lineage>
</organism>
<accession>A7IPQ5</accession>
<name>RL6_XANP2</name>
<evidence type="ECO:0000255" key="1">
    <source>
        <dbReference type="HAMAP-Rule" id="MF_01365"/>
    </source>
</evidence>
<evidence type="ECO:0000305" key="2"/>
<sequence length="177" mass="19007">MSKIGKLPVAIPAGVTASLDGQTVKVKGPKGALEVTLVEEIAAKIEGSELKVSMNGETTRHKAMWGMSRTLVANLVEGVTKGFEKKLEITGVGYKAAVQGKNLNLSLGYSHDVIYAIPEGIQIVTPKPTEVVISGIDRQKVGQVAAEIREFRGPEPYKGKGVKYAGEFIFRKEGKKK</sequence>
<gene>
    <name evidence="1" type="primary">rplF</name>
    <name type="ordered locus">Xaut_4783</name>
</gene>
<reference key="1">
    <citation type="submission" date="2007-07" db="EMBL/GenBank/DDBJ databases">
        <title>Complete sequence of chromosome of Xanthobacter autotrophicus Py2.</title>
        <authorList>
            <consortium name="US DOE Joint Genome Institute"/>
            <person name="Copeland A."/>
            <person name="Lucas S."/>
            <person name="Lapidus A."/>
            <person name="Barry K."/>
            <person name="Glavina del Rio T."/>
            <person name="Hammon N."/>
            <person name="Israni S."/>
            <person name="Dalin E."/>
            <person name="Tice H."/>
            <person name="Pitluck S."/>
            <person name="Sims D."/>
            <person name="Brettin T."/>
            <person name="Bruce D."/>
            <person name="Detter J.C."/>
            <person name="Han C."/>
            <person name="Tapia R."/>
            <person name="Brainard J."/>
            <person name="Schmutz J."/>
            <person name="Larimer F."/>
            <person name="Land M."/>
            <person name="Hauser L."/>
            <person name="Kyrpides N."/>
            <person name="Kim E."/>
            <person name="Ensigns S.A."/>
            <person name="Richardson P."/>
        </authorList>
    </citation>
    <scope>NUCLEOTIDE SEQUENCE [LARGE SCALE GENOMIC DNA]</scope>
    <source>
        <strain>ATCC BAA-1158 / Py2</strain>
    </source>
</reference>
<comment type="function">
    <text evidence="1">This protein binds to the 23S rRNA, and is important in its secondary structure. It is located near the subunit interface in the base of the L7/L12 stalk, and near the tRNA binding site of the peptidyltransferase center.</text>
</comment>
<comment type="subunit">
    <text evidence="1">Part of the 50S ribosomal subunit.</text>
</comment>
<comment type="similarity">
    <text evidence="1">Belongs to the universal ribosomal protein uL6 family.</text>
</comment>
<keyword id="KW-1185">Reference proteome</keyword>
<keyword id="KW-0687">Ribonucleoprotein</keyword>
<keyword id="KW-0689">Ribosomal protein</keyword>
<keyword id="KW-0694">RNA-binding</keyword>
<keyword id="KW-0699">rRNA-binding</keyword>
<protein>
    <recommendedName>
        <fullName evidence="1">Large ribosomal subunit protein uL6</fullName>
    </recommendedName>
    <alternativeName>
        <fullName evidence="2">50S ribosomal protein L6</fullName>
    </alternativeName>
</protein>
<feature type="chain" id="PRO_1000144069" description="Large ribosomal subunit protein uL6">
    <location>
        <begin position="1"/>
        <end position="177"/>
    </location>
</feature>